<keyword id="KW-0963">Cytoplasm</keyword>
<keyword id="KW-0489">Methyltransferase</keyword>
<keyword id="KW-0698">rRNA processing</keyword>
<keyword id="KW-0949">S-adenosyl-L-methionine</keyword>
<keyword id="KW-0808">Transferase</keyword>
<dbReference type="EC" id="2.1.1.199" evidence="1"/>
<dbReference type="EMBL" id="CP000488">
    <property type="protein sequence ID" value="ABL02078.1"/>
    <property type="molecule type" value="Genomic_DNA"/>
</dbReference>
<dbReference type="SMR" id="A1AVX1"/>
<dbReference type="STRING" id="413404.Rmag_0298"/>
<dbReference type="KEGG" id="rma:Rmag_0298"/>
<dbReference type="eggNOG" id="COG0275">
    <property type="taxonomic scope" value="Bacteria"/>
</dbReference>
<dbReference type="HOGENOM" id="CLU_038422_2_0_6"/>
<dbReference type="OrthoDB" id="9806637at2"/>
<dbReference type="Proteomes" id="UP000002587">
    <property type="component" value="Chromosome"/>
</dbReference>
<dbReference type="GO" id="GO:0005737">
    <property type="term" value="C:cytoplasm"/>
    <property type="evidence" value="ECO:0007669"/>
    <property type="project" value="UniProtKB-SubCell"/>
</dbReference>
<dbReference type="GO" id="GO:0071424">
    <property type="term" value="F:rRNA (cytosine-N4-)-methyltransferase activity"/>
    <property type="evidence" value="ECO:0007669"/>
    <property type="project" value="UniProtKB-UniRule"/>
</dbReference>
<dbReference type="GO" id="GO:0070475">
    <property type="term" value="P:rRNA base methylation"/>
    <property type="evidence" value="ECO:0007669"/>
    <property type="project" value="UniProtKB-UniRule"/>
</dbReference>
<dbReference type="Gene3D" id="1.10.150.170">
    <property type="entry name" value="Putative methyltransferase TM0872, insert domain"/>
    <property type="match status" value="1"/>
</dbReference>
<dbReference type="Gene3D" id="3.40.50.150">
    <property type="entry name" value="Vaccinia Virus protein VP39"/>
    <property type="match status" value="1"/>
</dbReference>
<dbReference type="HAMAP" id="MF_01007">
    <property type="entry name" value="16SrRNA_methyltr_H"/>
    <property type="match status" value="1"/>
</dbReference>
<dbReference type="InterPro" id="IPR002903">
    <property type="entry name" value="RsmH"/>
</dbReference>
<dbReference type="InterPro" id="IPR023397">
    <property type="entry name" value="SAM-dep_MeTrfase_MraW_recog"/>
</dbReference>
<dbReference type="InterPro" id="IPR029063">
    <property type="entry name" value="SAM-dependent_MTases_sf"/>
</dbReference>
<dbReference type="NCBIfam" id="TIGR00006">
    <property type="entry name" value="16S rRNA (cytosine(1402)-N(4))-methyltransferase RsmH"/>
    <property type="match status" value="1"/>
</dbReference>
<dbReference type="PANTHER" id="PTHR11265:SF0">
    <property type="entry name" value="12S RRNA N4-METHYLCYTIDINE METHYLTRANSFERASE"/>
    <property type="match status" value="1"/>
</dbReference>
<dbReference type="PANTHER" id="PTHR11265">
    <property type="entry name" value="S-ADENOSYL-METHYLTRANSFERASE MRAW"/>
    <property type="match status" value="1"/>
</dbReference>
<dbReference type="Pfam" id="PF01795">
    <property type="entry name" value="Methyltransf_5"/>
    <property type="match status" value="1"/>
</dbReference>
<dbReference type="PIRSF" id="PIRSF004486">
    <property type="entry name" value="MraW"/>
    <property type="match status" value="1"/>
</dbReference>
<dbReference type="SUPFAM" id="SSF81799">
    <property type="entry name" value="Putative methyltransferase TM0872, insert domain"/>
    <property type="match status" value="1"/>
</dbReference>
<dbReference type="SUPFAM" id="SSF53335">
    <property type="entry name" value="S-adenosyl-L-methionine-dependent methyltransferases"/>
    <property type="match status" value="1"/>
</dbReference>
<gene>
    <name evidence="1" type="primary">rsmH</name>
    <name type="synonym">mraW</name>
    <name type="ordered locus">Rmag_0298</name>
</gene>
<reference key="1">
    <citation type="journal article" date="2007" name="Science">
        <title>The Calyptogena magnifica chemoautotrophic symbiont genome.</title>
        <authorList>
            <person name="Newton I.L.G."/>
            <person name="Woyke T."/>
            <person name="Auchtung T.A."/>
            <person name="Dilly G.F."/>
            <person name="Dutton R.J."/>
            <person name="Fisher M.C."/>
            <person name="Fontanez K.M."/>
            <person name="Lau E."/>
            <person name="Stewart F.J."/>
            <person name="Richardson P.M."/>
            <person name="Barry K.W."/>
            <person name="Saunders E."/>
            <person name="Detter J.C."/>
            <person name="Wu D."/>
            <person name="Eisen J.A."/>
            <person name="Cavanaugh C.M."/>
        </authorList>
    </citation>
    <scope>NUCLEOTIDE SEQUENCE [LARGE SCALE GENOMIC DNA]</scope>
</reference>
<accession>A1AVX1</accession>
<name>RSMH_RUTMC</name>
<proteinExistence type="inferred from homology"/>
<evidence type="ECO:0000255" key="1">
    <source>
        <dbReference type="HAMAP-Rule" id="MF_01007"/>
    </source>
</evidence>
<feature type="chain" id="PRO_0000387091" description="Ribosomal RNA small subunit methyltransferase H">
    <location>
        <begin position="1"/>
        <end position="307"/>
    </location>
</feature>
<feature type="binding site" evidence="1">
    <location>
        <begin position="34"/>
        <end position="36"/>
    </location>
    <ligand>
        <name>S-adenosyl-L-methionine</name>
        <dbReference type="ChEBI" id="CHEBI:59789"/>
    </ligand>
</feature>
<feature type="binding site" evidence="1">
    <location>
        <position position="54"/>
    </location>
    <ligand>
        <name>S-adenosyl-L-methionine</name>
        <dbReference type="ChEBI" id="CHEBI:59789"/>
    </ligand>
</feature>
<feature type="binding site" evidence="1">
    <location>
        <position position="79"/>
    </location>
    <ligand>
        <name>S-adenosyl-L-methionine</name>
        <dbReference type="ChEBI" id="CHEBI:59789"/>
    </ligand>
</feature>
<feature type="binding site" evidence="1">
    <location>
        <position position="101"/>
    </location>
    <ligand>
        <name>S-adenosyl-L-methionine</name>
        <dbReference type="ChEBI" id="CHEBI:59789"/>
    </ligand>
</feature>
<feature type="binding site" evidence="1">
    <location>
        <position position="108"/>
    </location>
    <ligand>
        <name>S-adenosyl-L-methionine</name>
        <dbReference type="ChEBI" id="CHEBI:59789"/>
    </ligand>
</feature>
<protein>
    <recommendedName>
        <fullName evidence="1">Ribosomal RNA small subunit methyltransferase H</fullName>
        <ecNumber evidence="1">2.1.1.199</ecNumber>
    </recommendedName>
    <alternativeName>
        <fullName evidence="1">16S rRNA m(4)C1402 methyltransferase</fullName>
    </alternativeName>
    <alternativeName>
        <fullName evidence="1">rRNA (cytosine-N(4)-)-methyltransferase RsmH</fullName>
    </alternativeName>
</protein>
<comment type="function">
    <text evidence="1">Specifically methylates the N4 position of cytidine in position 1402 (C1402) of 16S rRNA.</text>
</comment>
<comment type="catalytic activity">
    <reaction evidence="1">
        <text>cytidine(1402) in 16S rRNA + S-adenosyl-L-methionine = N(4)-methylcytidine(1402) in 16S rRNA + S-adenosyl-L-homocysteine + H(+)</text>
        <dbReference type="Rhea" id="RHEA:42928"/>
        <dbReference type="Rhea" id="RHEA-COMP:10286"/>
        <dbReference type="Rhea" id="RHEA-COMP:10287"/>
        <dbReference type="ChEBI" id="CHEBI:15378"/>
        <dbReference type="ChEBI" id="CHEBI:57856"/>
        <dbReference type="ChEBI" id="CHEBI:59789"/>
        <dbReference type="ChEBI" id="CHEBI:74506"/>
        <dbReference type="ChEBI" id="CHEBI:82748"/>
        <dbReference type="EC" id="2.1.1.199"/>
    </reaction>
</comment>
<comment type="subcellular location">
    <subcellularLocation>
        <location evidence="1">Cytoplasm</location>
    </subcellularLocation>
</comment>
<comment type="similarity">
    <text evidence="1">Belongs to the methyltransferase superfamily. RsmH family.</text>
</comment>
<organism>
    <name type="scientific">Ruthia magnifica subsp. Calyptogena magnifica</name>
    <dbReference type="NCBI Taxonomy" id="413404"/>
    <lineage>
        <taxon>Bacteria</taxon>
        <taxon>Pseudomonadati</taxon>
        <taxon>Pseudomonadota</taxon>
        <taxon>Gammaproteobacteria</taxon>
        <taxon>Candidatus Pseudothioglobaceae</taxon>
        <taxon>Candidatus Ruthturnera</taxon>
    </lineage>
</organism>
<sequence length="307" mass="34814">MIFNHHQSVMLNESIGALNIKTDGIYIDATFGRGGHAQGILNKLGEQGKLIAFDQDINAIEYAHKNFTDSRLTLIYSAFSNMLNIITQQGLMSKIDGILMDLGVSSPQLDNAQRGFSFKADGPLDMRMNQTTGMSATQWLNLANEEEIANVIYQFGDEKRSRHIATRIKKYQQKHTLETTLALAGIVSKVVKRQKNKHPATRTFQAIRIFINQELKQLEDVLEQSKDILRKDGRLSIISFHSIEDRIVKHFIQKNSRQKNLPKGLPIIDYKIEKTCLKNLGKYFASKAEISRNKRARSAILRVASKN</sequence>